<sequence length="198" mass="21747">WYSGMFAPNIKQEPISHHHHHHHAHHSHHQHPHDSNSNSNASSPHQSPLPSPNPPSNTILQLEQYLKQQQQQQQQQQQQQQQQPMDTLCAAAMTPSPSNNDQNSPLMPPGLPNPMQSIMPANLRPCPTATTTTTPAAAAPTTTAATIVLQANDKLQALTPPMDVTPPKSPAKSQQSCAEPEKEHDLMSNSSEDMKYMA</sequence>
<name>HUNB_DROCY</name>
<protein>
    <recommendedName>
        <fullName>Protein hunchback</fullName>
    </recommendedName>
</protein>
<comment type="function">
    <text evidence="1">Gap class segmentation protein that controls development of head structures.</text>
</comment>
<comment type="subcellular location">
    <subcellularLocation>
        <location evidence="1">Nucleus</location>
    </subcellularLocation>
</comment>
<comment type="similarity">
    <text evidence="3">Belongs to the hunchback C2H2-type zinc-finger protein family.</text>
</comment>
<keyword id="KW-0217">Developmental protein</keyword>
<keyword id="KW-0238">DNA-binding</keyword>
<keyword id="KW-0302">Gap protein</keyword>
<keyword id="KW-0479">Metal-binding</keyword>
<keyword id="KW-0539">Nucleus</keyword>
<keyword id="KW-0677">Repeat</keyword>
<keyword id="KW-0862">Zinc</keyword>
<keyword id="KW-0863">Zinc-finger</keyword>
<feature type="chain" id="PRO_0000046952" description="Protein hunchback">
    <location>
        <begin position="1" status="less than"/>
        <end position="198" status="greater than"/>
    </location>
</feature>
<feature type="region of interest" description="Disordered" evidence="2">
    <location>
        <begin position="16"/>
        <end position="116"/>
    </location>
</feature>
<feature type="region of interest" description="Disordered" evidence="2">
    <location>
        <begin position="158"/>
        <end position="198"/>
    </location>
</feature>
<feature type="compositionally biased region" description="Basic residues" evidence="2">
    <location>
        <begin position="17"/>
        <end position="31"/>
    </location>
</feature>
<feature type="compositionally biased region" description="Low complexity" evidence="2">
    <location>
        <begin position="35"/>
        <end position="46"/>
    </location>
</feature>
<feature type="compositionally biased region" description="Low complexity" evidence="2">
    <location>
        <begin position="68"/>
        <end position="83"/>
    </location>
</feature>
<feature type="compositionally biased region" description="Polar residues" evidence="2">
    <location>
        <begin position="95"/>
        <end position="105"/>
    </location>
</feature>
<feature type="compositionally biased region" description="Basic and acidic residues" evidence="2">
    <location>
        <begin position="179"/>
        <end position="198"/>
    </location>
</feature>
<feature type="non-consecutive residues" evidence="3">
    <location>
        <begin position="104"/>
        <end position="105"/>
    </location>
</feature>
<feature type="non-terminal residue">
    <location>
        <position position="1"/>
    </location>
</feature>
<feature type="non-terminal residue">
    <location>
        <position position="198"/>
    </location>
</feature>
<accession>O46238</accession>
<accession>O46239</accession>
<gene>
    <name type="primary">hb</name>
</gene>
<organism>
    <name type="scientific">Drosophila cyrtoloma</name>
    <name type="common">Fruit fly</name>
    <dbReference type="NCBI Taxonomy" id="46895"/>
    <lineage>
        <taxon>Eukaryota</taxon>
        <taxon>Metazoa</taxon>
        <taxon>Ecdysozoa</taxon>
        <taxon>Arthropoda</taxon>
        <taxon>Hexapoda</taxon>
        <taxon>Insecta</taxon>
        <taxon>Pterygota</taxon>
        <taxon>Neoptera</taxon>
        <taxon>Endopterygota</taxon>
        <taxon>Diptera</taxon>
        <taxon>Brachycera</taxon>
        <taxon>Muscomorpha</taxon>
        <taxon>Ephydroidea</taxon>
        <taxon>Drosophilidae</taxon>
        <taxon>Drosophila</taxon>
        <taxon>Hawaiian Drosophila</taxon>
    </lineage>
</organism>
<evidence type="ECO:0000250" key="1"/>
<evidence type="ECO:0000256" key="2">
    <source>
        <dbReference type="SAM" id="MobiDB-lite"/>
    </source>
</evidence>
<evidence type="ECO:0000305" key="3"/>
<reference key="1">
    <citation type="journal article" date="1997" name="Syst. Biol.">
        <title>Multiple sources of character information and the phylogeny of Hawaiian Drosophilids.</title>
        <authorList>
            <person name="Baker R.H."/>
            <person name="DeSalle R."/>
        </authorList>
    </citation>
    <scope>NUCLEOTIDE SEQUENCE [GENOMIC DNA]</scope>
</reference>
<proteinExistence type="inferred from homology"/>
<dbReference type="EMBL" id="U93002">
    <property type="protein sequence ID" value="AAC03250.1"/>
    <property type="molecule type" value="Genomic_DNA"/>
</dbReference>
<dbReference type="EMBL" id="U93003">
    <property type="protein sequence ID" value="AAC03251.1"/>
    <property type="molecule type" value="Genomic_DNA"/>
</dbReference>
<dbReference type="GO" id="GO:0005634">
    <property type="term" value="C:nucleus"/>
    <property type="evidence" value="ECO:0007669"/>
    <property type="project" value="UniProtKB-SubCell"/>
</dbReference>
<dbReference type="GO" id="GO:0003677">
    <property type="term" value="F:DNA binding"/>
    <property type="evidence" value="ECO:0007669"/>
    <property type="project" value="UniProtKB-KW"/>
</dbReference>
<dbReference type="GO" id="GO:0008270">
    <property type="term" value="F:zinc ion binding"/>
    <property type="evidence" value="ECO:0007669"/>
    <property type="project" value="UniProtKB-KW"/>
</dbReference>
<dbReference type="GO" id="GO:0035282">
    <property type="term" value="P:segmentation"/>
    <property type="evidence" value="ECO:0007669"/>
    <property type="project" value="UniProtKB-KW"/>
</dbReference>